<dbReference type="EC" id="2.6.99.2" evidence="1"/>
<dbReference type="EMBL" id="AP009178">
    <property type="protein sequence ID" value="BAF70195.1"/>
    <property type="molecule type" value="Genomic_DNA"/>
</dbReference>
<dbReference type="RefSeq" id="WP_012082458.1">
    <property type="nucleotide sequence ID" value="NC_009662.1"/>
</dbReference>
<dbReference type="SMR" id="A6Q3Y6"/>
<dbReference type="FunCoup" id="A6Q3Y6">
    <property type="interactions" value="294"/>
</dbReference>
<dbReference type="STRING" id="387092.NIS_1086"/>
<dbReference type="KEGG" id="nis:NIS_1086"/>
<dbReference type="eggNOG" id="COG0854">
    <property type="taxonomic scope" value="Bacteria"/>
</dbReference>
<dbReference type="HOGENOM" id="CLU_074563_0_0_7"/>
<dbReference type="InParanoid" id="A6Q3Y6"/>
<dbReference type="OrthoDB" id="9806590at2"/>
<dbReference type="UniPathway" id="UPA00244">
    <property type="reaction ID" value="UER00313"/>
</dbReference>
<dbReference type="Proteomes" id="UP000001118">
    <property type="component" value="Chromosome"/>
</dbReference>
<dbReference type="GO" id="GO:0005829">
    <property type="term" value="C:cytosol"/>
    <property type="evidence" value="ECO:0007669"/>
    <property type="project" value="TreeGrafter"/>
</dbReference>
<dbReference type="GO" id="GO:0033856">
    <property type="term" value="F:pyridoxine 5'-phosphate synthase activity"/>
    <property type="evidence" value="ECO:0007669"/>
    <property type="project" value="UniProtKB-EC"/>
</dbReference>
<dbReference type="GO" id="GO:0008615">
    <property type="term" value="P:pyridoxine biosynthetic process"/>
    <property type="evidence" value="ECO:0007669"/>
    <property type="project" value="UniProtKB-UniRule"/>
</dbReference>
<dbReference type="CDD" id="cd00003">
    <property type="entry name" value="PNPsynthase"/>
    <property type="match status" value="1"/>
</dbReference>
<dbReference type="Gene3D" id="3.20.20.70">
    <property type="entry name" value="Aldolase class I"/>
    <property type="match status" value="1"/>
</dbReference>
<dbReference type="HAMAP" id="MF_00279">
    <property type="entry name" value="PdxJ"/>
    <property type="match status" value="1"/>
</dbReference>
<dbReference type="InterPro" id="IPR013785">
    <property type="entry name" value="Aldolase_TIM"/>
</dbReference>
<dbReference type="InterPro" id="IPR004569">
    <property type="entry name" value="PyrdxlP_synth_PdxJ"/>
</dbReference>
<dbReference type="InterPro" id="IPR036130">
    <property type="entry name" value="Pyridoxine-5'_phos_synth"/>
</dbReference>
<dbReference type="NCBIfam" id="TIGR00559">
    <property type="entry name" value="pdxJ"/>
    <property type="match status" value="1"/>
</dbReference>
<dbReference type="NCBIfam" id="NF003625">
    <property type="entry name" value="PRK05265.1-3"/>
    <property type="match status" value="1"/>
</dbReference>
<dbReference type="NCBIfam" id="NF003627">
    <property type="entry name" value="PRK05265.1-5"/>
    <property type="match status" value="1"/>
</dbReference>
<dbReference type="PANTHER" id="PTHR30456">
    <property type="entry name" value="PYRIDOXINE 5'-PHOSPHATE SYNTHASE"/>
    <property type="match status" value="1"/>
</dbReference>
<dbReference type="PANTHER" id="PTHR30456:SF0">
    <property type="entry name" value="PYRIDOXINE 5'-PHOSPHATE SYNTHASE"/>
    <property type="match status" value="1"/>
</dbReference>
<dbReference type="Pfam" id="PF03740">
    <property type="entry name" value="PdxJ"/>
    <property type="match status" value="1"/>
</dbReference>
<dbReference type="SUPFAM" id="SSF63892">
    <property type="entry name" value="Pyridoxine 5'-phosphate synthase"/>
    <property type="match status" value="1"/>
</dbReference>
<evidence type="ECO:0000255" key="1">
    <source>
        <dbReference type="HAMAP-Rule" id="MF_00279"/>
    </source>
</evidence>
<protein>
    <recommendedName>
        <fullName evidence="1">Pyridoxine 5'-phosphate synthase</fullName>
        <shortName evidence="1">PNP synthase</shortName>
        <ecNumber evidence="1">2.6.99.2</ecNumber>
    </recommendedName>
</protein>
<name>PDXJ_NITSB</name>
<comment type="function">
    <text evidence="1">Catalyzes the complicated ring closure reaction between the two acyclic compounds 1-deoxy-D-xylulose-5-phosphate (DXP) and 3-amino-2-oxopropyl phosphate (1-amino-acetone-3-phosphate or AAP) to form pyridoxine 5'-phosphate (PNP) and inorganic phosphate.</text>
</comment>
<comment type="catalytic activity">
    <reaction evidence="1">
        <text>3-amino-2-oxopropyl phosphate + 1-deoxy-D-xylulose 5-phosphate = pyridoxine 5'-phosphate + phosphate + 2 H2O + H(+)</text>
        <dbReference type="Rhea" id="RHEA:15265"/>
        <dbReference type="ChEBI" id="CHEBI:15377"/>
        <dbReference type="ChEBI" id="CHEBI:15378"/>
        <dbReference type="ChEBI" id="CHEBI:43474"/>
        <dbReference type="ChEBI" id="CHEBI:57279"/>
        <dbReference type="ChEBI" id="CHEBI:57792"/>
        <dbReference type="ChEBI" id="CHEBI:58589"/>
        <dbReference type="EC" id="2.6.99.2"/>
    </reaction>
</comment>
<comment type="pathway">
    <text evidence="1">Cofactor biosynthesis; pyridoxine 5'-phosphate biosynthesis; pyridoxine 5'-phosphate from D-erythrose 4-phosphate: step 5/5.</text>
</comment>
<comment type="subunit">
    <text evidence="1">Homooctamer; tetramer of dimers.</text>
</comment>
<comment type="subcellular location">
    <subcellularLocation>
        <location evidence="1">Cytoplasm</location>
    </subcellularLocation>
</comment>
<comment type="similarity">
    <text evidence="1">Belongs to the PNP synthase family.</text>
</comment>
<sequence>MKLGVNIDHIAVLREARKINDPDPIEALPIVKRAGADQITIHLREDRRHINDFDAKRIIEYSSLPVNMECSIDPDIIDIVAQLKPHRATLVPEKREEVTTEGGLDVIGQYERISDAIEKLKANEIDVSLFIDPDIEIIAACADTGADMVELHTGEYANIYAMLYSNLSKTPHSIKSLELSRKELQEKLSIAIGDLENAAIYAAKSGLLVAAGHGLNYQNVGTIAAMANIIELNIGQSIIARSIWDGLFEAVRKMKEIIDEAGHCH</sequence>
<accession>A6Q3Y6</accession>
<organism>
    <name type="scientific">Nitratiruptor sp. (strain SB155-2)</name>
    <dbReference type="NCBI Taxonomy" id="387092"/>
    <lineage>
        <taxon>Bacteria</taxon>
        <taxon>Pseudomonadati</taxon>
        <taxon>Campylobacterota</taxon>
        <taxon>Epsilonproteobacteria</taxon>
        <taxon>Nautiliales</taxon>
        <taxon>Nitratiruptoraceae</taxon>
        <taxon>Nitratiruptor</taxon>
    </lineage>
</organism>
<proteinExistence type="inferred from homology"/>
<gene>
    <name evidence="1" type="primary">pdxJ</name>
    <name type="ordered locus">NIS_1086</name>
</gene>
<feature type="chain" id="PRO_1000022382" description="Pyridoxine 5'-phosphate synthase">
    <location>
        <begin position="1"/>
        <end position="265"/>
    </location>
</feature>
<feature type="active site" description="Proton acceptor" evidence="1">
    <location>
        <position position="42"/>
    </location>
</feature>
<feature type="active site" description="Proton acceptor" evidence="1">
    <location>
        <position position="69"/>
    </location>
</feature>
<feature type="active site" description="Proton donor" evidence="1">
    <location>
        <position position="213"/>
    </location>
</feature>
<feature type="binding site" evidence="1">
    <location>
        <position position="6"/>
    </location>
    <ligand>
        <name>3-amino-2-oxopropyl phosphate</name>
        <dbReference type="ChEBI" id="CHEBI:57279"/>
    </ligand>
</feature>
<feature type="binding site" evidence="1">
    <location>
        <begin position="8"/>
        <end position="9"/>
    </location>
    <ligand>
        <name>1-deoxy-D-xylulose 5-phosphate</name>
        <dbReference type="ChEBI" id="CHEBI:57792"/>
    </ligand>
</feature>
<feature type="binding site" evidence="1">
    <location>
        <position position="17"/>
    </location>
    <ligand>
        <name>3-amino-2-oxopropyl phosphate</name>
        <dbReference type="ChEBI" id="CHEBI:57279"/>
    </ligand>
</feature>
<feature type="binding site" evidence="1">
    <location>
        <position position="44"/>
    </location>
    <ligand>
        <name>1-deoxy-D-xylulose 5-phosphate</name>
        <dbReference type="ChEBI" id="CHEBI:57792"/>
    </ligand>
</feature>
<feature type="binding site" evidence="1">
    <location>
        <position position="49"/>
    </location>
    <ligand>
        <name>1-deoxy-D-xylulose 5-phosphate</name>
        <dbReference type="ChEBI" id="CHEBI:57792"/>
    </ligand>
</feature>
<feature type="binding site" evidence="1">
    <location>
        <position position="99"/>
    </location>
    <ligand>
        <name>1-deoxy-D-xylulose 5-phosphate</name>
        <dbReference type="ChEBI" id="CHEBI:57792"/>
    </ligand>
</feature>
<feature type="binding site" evidence="1">
    <location>
        <position position="214"/>
    </location>
    <ligand>
        <name>3-amino-2-oxopropyl phosphate</name>
        <dbReference type="ChEBI" id="CHEBI:57279"/>
    </ligand>
</feature>
<feature type="binding site" evidence="1">
    <location>
        <begin position="235"/>
        <end position="236"/>
    </location>
    <ligand>
        <name>3-amino-2-oxopropyl phosphate</name>
        <dbReference type="ChEBI" id="CHEBI:57279"/>
    </ligand>
</feature>
<feature type="site" description="Transition state stabilizer" evidence="1">
    <location>
        <position position="150"/>
    </location>
</feature>
<reference key="1">
    <citation type="journal article" date="2007" name="Proc. Natl. Acad. Sci. U.S.A.">
        <title>Deep-sea vent epsilon-proteobacterial genomes provide insights into emergence of pathogens.</title>
        <authorList>
            <person name="Nakagawa S."/>
            <person name="Takaki Y."/>
            <person name="Shimamura S."/>
            <person name="Reysenbach A.-L."/>
            <person name="Takai K."/>
            <person name="Horikoshi K."/>
        </authorList>
    </citation>
    <scope>NUCLEOTIDE SEQUENCE [LARGE SCALE GENOMIC DNA]</scope>
    <source>
        <strain>SB155-2</strain>
    </source>
</reference>
<keyword id="KW-0963">Cytoplasm</keyword>
<keyword id="KW-0664">Pyridoxine biosynthesis</keyword>
<keyword id="KW-1185">Reference proteome</keyword>
<keyword id="KW-0808">Transferase</keyword>